<protein>
    <recommendedName>
        <fullName evidence="4">CAPA-Pyrokinin</fullName>
        <shortName evidence="4">CAPA-PK</shortName>
    </recommendedName>
    <alternativeName>
        <fullName evidence="1">FXPRL-amide</fullName>
    </alternativeName>
</protein>
<sequence length="15" mass="1495">SGGGEGSGMWFGPRL</sequence>
<proteinExistence type="evidence at protein level"/>
<accession>B0M3C4</accession>
<name>PPK4_MANKU</name>
<organism>
    <name type="scientific">Mantophasma kudubergense</name>
    <name type="common">Gladiator</name>
    <name type="synonym">Heel-walker</name>
    <dbReference type="NCBI Taxonomy" id="1037657"/>
    <lineage>
        <taxon>Eukaryota</taxon>
        <taxon>Metazoa</taxon>
        <taxon>Ecdysozoa</taxon>
        <taxon>Arthropoda</taxon>
        <taxon>Hexapoda</taxon>
        <taxon>Insecta</taxon>
        <taxon>Pterygota</taxon>
        <taxon>Neoptera</taxon>
        <taxon>Polyneoptera</taxon>
        <taxon>Mantophasmatodea</taxon>
        <taxon>Mantophasmatidae</taxon>
        <taxon>Mantophasma</taxon>
    </lineage>
</organism>
<comment type="function">
    <text evidence="1">Myoactive.</text>
</comment>
<comment type="subcellular location">
    <subcellularLocation>
        <location evidence="6">Secreted</location>
    </subcellularLocation>
</comment>
<comment type="similarity">
    <text evidence="2">Belongs to the pyrokinin family.</text>
</comment>
<keyword id="KW-0027">Amidation</keyword>
<keyword id="KW-0903">Direct protein sequencing</keyword>
<keyword id="KW-0527">Neuropeptide</keyword>
<keyword id="KW-0964">Secreted</keyword>
<reference evidence="5" key="1">
    <citation type="journal article" date="2012" name="Syst. Biol.">
        <title>Peptidomics-based phylogeny and biogeography of Mantophasmatodea (Hexapoda).</title>
        <authorList>
            <person name="Predel R."/>
            <person name="Neupert S."/>
            <person name="Huetteroth W."/>
            <person name="Kahnt J."/>
            <person name="Waidelich D."/>
            <person name="Roth S."/>
        </authorList>
    </citation>
    <scope>PROTEIN SEQUENCE</scope>
    <scope>AMIDATION AT LEU-15</scope>
    <source>
        <tissue evidence="3">Abdominal perisympathetic organs</tissue>
    </source>
</reference>
<feature type="peptide" id="PRO_0000420786" description="CAPA-Pyrokinin" evidence="3">
    <location>
        <begin position="1"/>
        <end position="15"/>
    </location>
</feature>
<feature type="modified residue" description="Leucine amide" evidence="3">
    <location>
        <position position="15"/>
    </location>
</feature>
<evidence type="ECO:0000250" key="1">
    <source>
        <dbReference type="UniProtKB" id="P82617"/>
    </source>
</evidence>
<evidence type="ECO:0000255" key="2"/>
<evidence type="ECO:0000269" key="3">
    <source>
    </source>
</evidence>
<evidence type="ECO:0000303" key="4">
    <source>
    </source>
</evidence>
<evidence type="ECO:0000305" key="5"/>
<evidence type="ECO:0000305" key="6">
    <source>
    </source>
</evidence>
<dbReference type="GO" id="GO:0005576">
    <property type="term" value="C:extracellular region"/>
    <property type="evidence" value="ECO:0007669"/>
    <property type="project" value="UniProtKB-SubCell"/>
</dbReference>
<dbReference type="GO" id="GO:0005184">
    <property type="term" value="F:neuropeptide hormone activity"/>
    <property type="evidence" value="ECO:0007669"/>
    <property type="project" value="InterPro"/>
</dbReference>
<dbReference type="GO" id="GO:0007218">
    <property type="term" value="P:neuropeptide signaling pathway"/>
    <property type="evidence" value="ECO:0007669"/>
    <property type="project" value="UniProtKB-KW"/>
</dbReference>
<dbReference type="InterPro" id="IPR001484">
    <property type="entry name" value="Pyrokinin_CS"/>
</dbReference>
<dbReference type="PROSITE" id="PS00539">
    <property type="entry name" value="PYROKININ"/>
    <property type="match status" value="1"/>
</dbReference>